<proteinExistence type="inferred from homology"/>
<name>GLYA_SHESH</name>
<protein>
    <recommendedName>
        <fullName evidence="1">Serine hydroxymethyltransferase</fullName>
        <shortName evidence="1">SHMT</shortName>
        <shortName evidence="1">Serine methylase</shortName>
        <ecNumber evidence="1">2.1.2.1</ecNumber>
    </recommendedName>
</protein>
<comment type="function">
    <text evidence="1">Catalyzes the reversible interconversion of serine and glycine with tetrahydrofolate (THF) serving as the one-carbon carrier. This reaction serves as the major source of one-carbon groups required for the biosynthesis of purines, thymidylate, methionine, and other important biomolecules. Also exhibits THF-independent aldolase activity toward beta-hydroxyamino acids, producing glycine and aldehydes, via a retro-aldol mechanism.</text>
</comment>
<comment type="catalytic activity">
    <reaction evidence="1">
        <text>(6R)-5,10-methylene-5,6,7,8-tetrahydrofolate + glycine + H2O = (6S)-5,6,7,8-tetrahydrofolate + L-serine</text>
        <dbReference type="Rhea" id="RHEA:15481"/>
        <dbReference type="ChEBI" id="CHEBI:15377"/>
        <dbReference type="ChEBI" id="CHEBI:15636"/>
        <dbReference type="ChEBI" id="CHEBI:33384"/>
        <dbReference type="ChEBI" id="CHEBI:57305"/>
        <dbReference type="ChEBI" id="CHEBI:57453"/>
        <dbReference type="EC" id="2.1.2.1"/>
    </reaction>
</comment>
<comment type="cofactor">
    <cofactor evidence="1">
        <name>pyridoxal 5'-phosphate</name>
        <dbReference type="ChEBI" id="CHEBI:597326"/>
    </cofactor>
</comment>
<comment type="pathway">
    <text evidence="1">One-carbon metabolism; tetrahydrofolate interconversion.</text>
</comment>
<comment type="pathway">
    <text evidence="1">Amino-acid biosynthesis; glycine biosynthesis; glycine from L-serine: step 1/1.</text>
</comment>
<comment type="subunit">
    <text evidence="1">Homodimer.</text>
</comment>
<comment type="subcellular location">
    <subcellularLocation>
        <location evidence="1">Cytoplasm</location>
    </subcellularLocation>
</comment>
<comment type="similarity">
    <text evidence="1">Belongs to the SHMT family.</text>
</comment>
<feature type="chain" id="PRO_1000074910" description="Serine hydroxymethyltransferase">
    <location>
        <begin position="1"/>
        <end position="418"/>
    </location>
</feature>
<feature type="binding site" evidence="1">
    <location>
        <position position="121"/>
    </location>
    <ligand>
        <name>(6S)-5,6,7,8-tetrahydrofolate</name>
        <dbReference type="ChEBI" id="CHEBI:57453"/>
    </ligand>
</feature>
<feature type="binding site" evidence="1">
    <location>
        <begin position="125"/>
        <end position="127"/>
    </location>
    <ligand>
        <name>(6S)-5,6,7,8-tetrahydrofolate</name>
        <dbReference type="ChEBI" id="CHEBI:57453"/>
    </ligand>
</feature>
<feature type="binding site" evidence="1">
    <location>
        <begin position="356"/>
        <end position="358"/>
    </location>
    <ligand>
        <name>(6S)-5,6,7,8-tetrahydrofolate</name>
        <dbReference type="ChEBI" id="CHEBI:57453"/>
    </ligand>
</feature>
<feature type="site" description="Plays an important role in substrate specificity" evidence="1">
    <location>
        <position position="229"/>
    </location>
</feature>
<feature type="modified residue" description="N6-(pyridoxal phosphate)lysine" evidence="1">
    <location>
        <position position="230"/>
    </location>
</feature>
<gene>
    <name evidence="1" type="primary">glyA</name>
    <name type="ordered locus">Ssed_1271</name>
</gene>
<reference key="1">
    <citation type="submission" date="2007-08" db="EMBL/GenBank/DDBJ databases">
        <title>Complete sequence of Shewanella sediminis HAW-EB3.</title>
        <authorList>
            <consortium name="US DOE Joint Genome Institute"/>
            <person name="Copeland A."/>
            <person name="Lucas S."/>
            <person name="Lapidus A."/>
            <person name="Barry K."/>
            <person name="Glavina del Rio T."/>
            <person name="Dalin E."/>
            <person name="Tice H."/>
            <person name="Pitluck S."/>
            <person name="Chertkov O."/>
            <person name="Brettin T."/>
            <person name="Bruce D."/>
            <person name="Detter J.C."/>
            <person name="Han C."/>
            <person name="Schmutz J."/>
            <person name="Larimer F."/>
            <person name="Land M."/>
            <person name="Hauser L."/>
            <person name="Kyrpides N."/>
            <person name="Kim E."/>
            <person name="Zhao J.-S."/>
            <person name="Richardson P."/>
        </authorList>
    </citation>
    <scope>NUCLEOTIDE SEQUENCE [LARGE SCALE GENOMIC DNA]</scope>
    <source>
        <strain>HAW-EB3</strain>
    </source>
</reference>
<keyword id="KW-0028">Amino-acid biosynthesis</keyword>
<keyword id="KW-0963">Cytoplasm</keyword>
<keyword id="KW-0554">One-carbon metabolism</keyword>
<keyword id="KW-0663">Pyridoxal phosphate</keyword>
<keyword id="KW-1185">Reference proteome</keyword>
<keyword id="KW-0808">Transferase</keyword>
<dbReference type="EC" id="2.1.2.1" evidence="1"/>
<dbReference type="EMBL" id="CP000821">
    <property type="protein sequence ID" value="ABV35882.1"/>
    <property type="molecule type" value="Genomic_DNA"/>
</dbReference>
<dbReference type="RefSeq" id="WP_012141618.1">
    <property type="nucleotide sequence ID" value="NC_009831.1"/>
</dbReference>
<dbReference type="SMR" id="A8FSQ9"/>
<dbReference type="STRING" id="425104.Ssed_1271"/>
<dbReference type="KEGG" id="sse:Ssed_1271"/>
<dbReference type="eggNOG" id="COG0112">
    <property type="taxonomic scope" value="Bacteria"/>
</dbReference>
<dbReference type="HOGENOM" id="CLU_022477_2_1_6"/>
<dbReference type="OrthoDB" id="9803846at2"/>
<dbReference type="UniPathway" id="UPA00193"/>
<dbReference type="UniPathway" id="UPA00288">
    <property type="reaction ID" value="UER01023"/>
</dbReference>
<dbReference type="Proteomes" id="UP000002015">
    <property type="component" value="Chromosome"/>
</dbReference>
<dbReference type="GO" id="GO:0005829">
    <property type="term" value="C:cytosol"/>
    <property type="evidence" value="ECO:0007669"/>
    <property type="project" value="TreeGrafter"/>
</dbReference>
<dbReference type="GO" id="GO:0004372">
    <property type="term" value="F:glycine hydroxymethyltransferase activity"/>
    <property type="evidence" value="ECO:0007669"/>
    <property type="project" value="UniProtKB-UniRule"/>
</dbReference>
<dbReference type="GO" id="GO:0030170">
    <property type="term" value="F:pyridoxal phosphate binding"/>
    <property type="evidence" value="ECO:0007669"/>
    <property type="project" value="UniProtKB-UniRule"/>
</dbReference>
<dbReference type="GO" id="GO:0019264">
    <property type="term" value="P:glycine biosynthetic process from serine"/>
    <property type="evidence" value="ECO:0007669"/>
    <property type="project" value="UniProtKB-UniRule"/>
</dbReference>
<dbReference type="GO" id="GO:0035999">
    <property type="term" value="P:tetrahydrofolate interconversion"/>
    <property type="evidence" value="ECO:0007669"/>
    <property type="project" value="UniProtKB-UniRule"/>
</dbReference>
<dbReference type="CDD" id="cd00378">
    <property type="entry name" value="SHMT"/>
    <property type="match status" value="1"/>
</dbReference>
<dbReference type="FunFam" id="3.40.640.10:FF:000001">
    <property type="entry name" value="Serine hydroxymethyltransferase"/>
    <property type="match status" value="1"/>
</dbReference>
<dbReference type="FunFam" id="3.90.1150.10:FF:000003">
    <property type="entry name" value="Serine hydroxymethyltransferase"/>
    <property type="match status" value="1"/>
</dbReference>
<dbReference type="Gene3D" id="3.90.1150.10">
    <property type="entry name" value="Aspartate Aminotransferase, domain 1"/>
    <property type="match status" value="1"/>
</dbReference>
<dbReference type="Gene3D" id="3.40.640.10">
    <property type="entry name" value="Type I PLP-dependent aspartate aminotransferase-like (Major domain)"/>
    <property type="match status" value="1"/>
</dbReference>
<dbReference type="HAMAP" id="MF_00051">
    <property type="entry name" value="SHMT"/>
    <property type="match status" value="1"/>
</dbReference>
<dbReference type="InterPro" id="IPR015424">
    <property type="entry name" value="PyrdxlP-dep_Trfase"/>
</dbReference>
<dbReference type="InterPro" id="IPR015421">
    <property type="entry name" value="PyrdxlP-dep_Trfase_major"/>
</dbReference>
<dbReference type="InterPro" id="IPR015422">
    <property type="entry name" value="PyrdxlP-dep_Trfase_small"/>
</dbReference>
<dbReference type="InterPro" id="IPR001085">
    <property type="entry name" value="Ser_HO-MeTrfase"/>
</dbReference>
<dbReference type="InterPro" id="IPR049943">
    <property type="entry name" value="Ser_HO-MeTrfase-like"/>
</dbReference>
<dbReference type="InterPro" id="IPR019798">
    <property type="entry name" value="Ser_HO-MeTrfase_PLP_BS"/>
</dbReference>
<dbReference type="InterPro" id="IPR039429">
    <property type="entry name" value="SHMT-like_dom"/>
</dbReference>
<dbReference type="NCBIfam" id="NF000586">
    <property type="entry name" value="PRK00011.1"/>
    <property type="match status" value="1"/>
</dbReference>
<dbReference type="PANTHER" id="PTHR11680">
    <property type="entry name" value="SERINE HYDROXYMETHYLTRANSFERASE"/>
    <property type="match status" value="1"/>
</dbReference>
<dbReference type="PANTHER" id="PTHR11680:SF50">
    <property type="entry name" value="SERINE HYDROXYMETHYLTRANSFERASE"/>
    <property type="match status" value="1"/>
</dbReference>
<dbReference type="Pfam" id="PF00464">
    <property type="entry name" value="SHMT"/>
    <property type="match status" value="1"/>
</dbReference>
<dbReference type="PIRSF" id="PIRSF000412">
    <property type="entry name" value="SHMT"/>
    <property type="match status" value="1"/>
</dbReference>
<dbReference type="SUPFAM" id="SSF53383">
    <property type="entry name" value="PLP-dependent transferases"/>
    <property type="match status" value="1"/>
</dbReference>
<dbReference type="PROSITE" id="PS00096">
    <property type="entry name" value="SHMT"/>
    <property type="match status" value="1"/>
</dbReference>
<organism>
    <name type="scientific">Shewanella sediminis (strain HAW-EB3)</name>
    <dbReference type="NCBI Taxonomy" id="425104"/>
    <lineage>
        <taxon>Bacteria</taxon>
        <taxon>Pseudomonadati</taxon>
        <taxon>Pseudomonadota</taxon>
        <taxon>Gammaproteobacteria</taxon>
        <taxon>Alteromonadales</taxon>
        <taxon>Shewanellaceae</taxon>
        <taxon>Shewanella</taxon>
    </lineage>
</organism>
<evidence type="ECO:0000255" key="1">
    <source>
        <dbReference type="HAMAP-Rule" id="MF_00051"/>
    </source>
</evidence>
<accession>A8FSQ9</accession>
<sequence length="418" mass="45262">MLKKDMNIADFDPQLFQAIADETRRQEEHIELIASENYTSPRVLEAQGSQLTNKYAEGYPGKRYYGGCEHVDIAEELAISRAKELFGATYANVQPHSGSQANSAVFMALLQGGDTVLGMSLAHGGHLTHGSHVSFSGKLYNAVQYGIDEATGKIDYAEVERLAVEHKPKMIIAGFSAYSGIIDWGKFREIADKVGAYLFVDMAHVAGLVAAGIYPNPLPHAHVVTTTTHKTLAGPRGGLILSACDDEAIYKKLNSAVFPGGQGGPLMHVIAAKAVAFKEALEPEFTAYQEQVVVNAKAMAKTFIERGYDVVSGGTDNHLFLLDLISKDITGKDADAALGLANITVNKNSVPNDPRSPFVTSGLRIGSPAITRRGFKEEQSVELTNWMCDVLDDITDQGTIERVKNQVLELCARFPVYG</sequence>